<sequence>MDKREEGTVEEPLDLIRLSLDERIFVKMRQDRELRGKLHAYDQHLNMILSDVEETIKVVEKDEETDEEIIRNIKRNIKMLFVRGDGVILISPPLRTS</sequence>
<proteinExistence type="inferred from homology"/>
<evidence type="ECO:0000250" key="1">
    <source>
        <dbReference type="UniProtKB" id="P62310"/>
    </source>
</evidence>
<evidence type="ECO:0000255" key="2">
    <source>
        <dbReference type="PROSITE-ProRule" id="PRU01346"/>
    </source>
</evidence>
<evidence type="ECO:0000305" key="3"/>
<gene>
    <name type="primary">lsm3</name>
    <name type="ORF">DDB_G0277107</name>
</gene>
<dbReference type="EMBL" id="AAFI02000019">
    <property type="protein sequence ID" value="EAS66906.1"/>
    <property type="molecule type" value="Genomic_DNA"/>
</dbReference>
<dbReference type="RefSeq" id="XP_001134590.1">
    <property type="nucleotide sequence ID" value="XM_001134590.1"/>
</dbReference>
<dbReference type="SMR" id="Q1ZXK3"/>
<dbReference type="FunCoup" id="Q1ZXK3">
    <property type="interactions" value="350"/>
</dbReference>
<dbReference type="STRING" id="44689.Q1ZXK3"/>
<dbReference type="PaxDb" id="44689-DDB0233377"/>
<dbReference type="EnsemblProtists" id="EAS66906">
    <property type="protein sequence ID" value="EAS66906"/>
    <property type="gene ID" value="DDB_G0277107"/>
</dbReference>
<dbReference type="GeneID" id="8620835"/>
<dbReference type="KEGG" id="ddi:DDB_G0277107"/>
<dbReference type="dictyBase" id="DDB_G0277107">
    <property type="gene designation" value="lsm3"/>
</dbReference>
<dbReference type="VEuPathDB" id="AmoebaDB:DDB_G0277107"/>
<dbReference type="eggNOG" id="KOG3460">
    <property type="taxonomic scope" value="Eukaryota"/>
</dbReference>
<dbReference type="HOGENOM" id="CLU_076902_5_1_1"/>
<dbReference type="InParanoid" id="Q1ZXK3"/>
<dbReference type="OMA" id="FDSHCNI"/>
<dbReference type="PhylomeDB" id="Q1ZXK3"/>
<dbReference type="Reactome" id="R-DDI-430039">
    <property type="pathway name" value="mRNA decay by 5' to 3' exoribonuclease"/>
</dbReference>
<dbReference type="PRO" id="PR:Q1ZXK3"/>
<dbReference type="Proteomes" id="UP000002195">
    <property type="component" value="Chromosome 2"/>
</dbReference>
<dbReference type="GO" id="GO:0071013">
    <property type="term" value="C:catalytic step 2 spliceosome"/>
    <property type="evidence" value="ECO:0000318"/>
    <property type="project" value="GO_Central"/>
</dbReference>
<dbReference type="GO" id="GO:1990726">
    <property type="term" value="C:Lsm1-7-Pat1 complex"/>
    <property type="evidence" value="ECO:0000318"/>
    <property type="project" value="GO_Central"/>
</dbReference>
<dbReference type="GO" id="GO:0005730">
    <property type="term" value="C:nucleolus"/>
    <property type="evidence" value="ECO:0000250"/>
    <property type="project" value="dictyBase"/>
</dbReference>
<dbReference type="GO" id="GO:0000932">
    <property type="term" value="C:P-body"/>
    <property type="evidence" value="ECO:0000318"/>
    <property type="project" value="GO_Central"/>
</dbReference>
<dbReference type="GO" id="GO:0071011">
    <property type="term" value="C:precatalytic spliceosome"/>
    <property type="evidence" value="ECO:0000318"/>
    <property type="project" value="GO_Central"/>
</dbReference>
<dbReference type="GO" id="GO:0005732">
    <property type="term" value="C:sno(s)RNA-containing ribonucleoprotein complex"/>
    <property type="evidence" value="ECO:0000250"/>
    <property type="project" value="dictyBase"/>
</dbReference>
<dbReference type="GO" id="GO:0046540">
    <property type="term" value="C:U4/U6 x U5 tri-snRNP complex"/>
    <property type="evidence" value="ECO:0000250"/>
    <property type="project" value="dictyBase"/>
</dbReference>
<dbReference type="GO" id="GO:0005688">
    <property type="term" value="C:U6 snRNP"/>
    <property type="evidence" value="ECO:0000250"/>
    <property type="project" value="dictyBase"/>
</dbReference>
<dbReference type="GO" id="GO:0003723">
    <property type="term" value="F:RNA binding"/>
    <property type="evidence" value="ECO:0000250"/>
    <property type="project" value="dictyBase"/>
</dbReference>
<dbReference type="GO" id="GO:0000398">
    <property type="term" value="P:mRNA splicing, via spliceosome"/>
    <property type="evidence" value="ECO:0000250"/>
    <property type="project" value="dictyBase"/>
</dbReference>
<dbReference type="GO" id="GO:0033962">
    <property type="term" value="P:P-body assembly"/>
    <property type="evidence" value="ECO:0000318"/>
    <property type="project" value="GO_Central"/>
</dbReference>
<dbReference type="CDD" id="cd01730">
    <property type="entry name" value="LSm3"/>
    <property type="match status" value="1"/>
</dbReference>
<dbReference type="FunFam" id="2.30.30.100:FF:000007">
    <property type="entry name" value="U6 snRNA-associated Sm-like protein LSm3"/>
    <property type="match status" value="1"/>
</dbReference>
<dbReference type="Gene3D" id="2.30.30.100">
    <property type="match status" value="1"/>
</dbReference>
<dbReference type="InterPro" id="IPR034105">
    <property type="entry name" value="Lsm3"/>
</dbReference>
<dbReference type="InterPro" id="IPR010920">
    <property type="entry name" value="LSM_dom_sf"/>
</dbReference>
<dbReference type="InterPro" id="IPR047575">
    <property type="entry name" value="Sm"/>
</dbReference>
<dbReference type="InterPro" id="IPR040002">
    <property type="entry name" value="Sm-like_LSM3"/>
</dbReference>
<dbReference type="InterPro" id="IPR001163">
    <property type="entry name" value="Sm_dom_euk/arc"/>
</dbReference>
<dbReference type="PANTHER" id="PTHR13110">
    <property type="entry name" value="U6 SNRNA-ASSOCIATED SM-LIKE PROTEIN LSM3"/>
    <property type="match status" value="1"/>
</dbReference>
<dbReference type="Pfam" id="PF01423">
    <property type="entry name" value="LSM"/>
    <property type="match status" value="1"/>
</dbReference>
<dbReference type="SMART" id="SM00651">
    <property type="entry name" value="Sm"/>
    <property type="match status" value="1"/>
</dbReference>
<dbReference type="SUPFAM" id="SSF50182">
    <property type="entry name" value="Sm-like ribonucleoproteins"/>
    <property type="match status" value="1"/>
</dbReference>
<dbReference type="PROSITE" id="PS52002">
    <property type="entry name" value="SM"/>
    <property type="match status" value="1"/>
</dbReference>
<keyword id="KW-0507">mRNA processing</keyword>
<keyword id="KW-0508">mRNA splicing</keyword>
<keyword id="KW-0539">Nucleus</keyword>
<keyword id="KW-1185">Reference proteome</keyword>
<keyword id="KW-0687">Ribonucleoprotein</keyword>
<keyword id="KW-0694">RNA-binding</keyword>
<keyword id="KW-0747">Spliceosome</keyword>
<protein>
    <recommendedName>
        <fullName>Probable U6 snRNA-associated Sm-like protein LSm3</fullName>
    </recommendedName>
</protein>
<accession>Q1ZXK3</accession>
<accession>Q86L06</accession>
<organism>
    <name type="scientific">Dictyostelium discoideum</name>
    <name type="common">Social amoeba</name>
    <dbReference type="NCBI Taxonomy" id="44689"/>
    <lineage>
        <taxon>Eukaryota</taxon>
        <taxon>Amoebozoa</taxon>
        <taxon>Evosea</taxon>
        <taxon>Eumycetozoa</taxon>
        <taxon>Dictyostelia</taxon>
        <taxon>Dictyosteliales</taxon>
        <taxon>Dictyosteliaceae</taxon>
        <taxon>Dictyostelium</taxon>
    </lineage>
</organism>
<reference key="1">
    <citation type="journal article" date="2002" name="Nature">
        <title>Sequence and analysis of chromosome 2 of Dictyostelium discoideum.</title>
        <authorList>
            <person name="Gloeckner G."/>
            <person name="Eichinger L."/>
            <person name="Szafranski K."/>
            <person name="Pachebat J.A."/>
            <person name="Bankier A.T."/>
            <person name="Dear P.H."/>
            <person name="Lehmann R."/>
            <person name="Baumgart C."/>
            <person name="Parra G."/>
            <person name="Abril J.F."/>
            <person name="Guigo R."/>
            <person name="Kumpf K."/>
            <person name="Tunggal B."/>
            <person name="Cox E.C."/>
            <person name="Quail M.A."/>
            <person name="Platzer M."/>
            <person name="Rosenthal A."/>
            <person name="Noegel A.A."/>
        </authorList>
    </citation>
    <scope>NUCLEOTIDE SEQUENCE [LARGE SCALE GENOMIC DNA]</scope>
    <source>
        <strain>AX4</strain>
    </source>
</reference>
<reference key="2">
    <citation type="journal article" date="2005" name="Nature">
        <title>The genome of the social amoeba Dictyostelium discoideum.</title>
        <authorList>
            <person name="Eichinger L."/>
            <person name="Pachebat J.A."/>
            <person name="Gloeckner G."/>
            <person name="Rajandream M.A."/>
            <person name="Sucgang R."/>
            <person name="Berriman M."/>
            <person name="Song J."/>
            <person name="Olsen R."/>
            <person name="Szafranski K."/>
            <person name="Xu Q."/>
            <person name="Tunggal B."/>
            <person name="Kummerfeld S."/>
            <person name="Madera M."/>
            <person name="Konfortov B.A."/>
            <person name="Rivero F."/>
            <person name="Bankier A.T."/>
            <person name="Lehmann R."/>
            <person name="Hamlin N."/>
            <person name="Davies R."/>
            <person name="Gaudet P."/>
            <person name="Fey P."/>
            <person name="Pilcher K."/>
            <person name="Chen G."/>
            <person name="Saunders D."/>
            <person name="Sodergren E.J."/>
            <person name="Davis P."/>
            <person name="Kerhornou A."/>
            <person name="Nie X."/>
            <person name="Hall N."/>
            <person name="Anjard C."/>
            <person name="Hemphill L."/>
            <person name="Bason N."/>
            <person name="Farbrother P."/>
            <person name="Desany B."/>
            <person name="Just E."/>
            <person name="Morio T."/>
            <person name="Rost R."/>
            <person name="Churcher C.M."/>
            <person name="Cooper J."/>
            <person name="Haydock S."/>
            <person name="van Driessche N."/>
            <person name="Cronin A."/>
            <person name="Goodhead I."/>
            <person name="Muzny D.M."/>
            <person name="Mourier T."/>
            <person name="Pain A."/>
            <person name="Lu M."/>
            <person name="Harper D."/>
            <person name="Lindsay R."/>
            <person name="Hauser H."/>
            <person name="James K.D."/>
            <person name="Quiles M."/>
            <person name="Madan Babu M."/>
            <person name="Saito T."/>
            <person name="Buchrieser C."/>
            <person name="Wardroper A."/>
            <person name="Felder M."/>
            <person name="Thangavelu M."/>
            <person name="Johnson D."/>
            <person name="Knights A."/>
            <person name="Loulseged H."/>
            <person name="Mungall K.L."/>
            <person name="Oliver K."/>
            <person name="Price C."/>
            <person name="Quail M.A."/>
            <person name="Urushihara H."/>
            <person name="Hernandez J."/>
            <person name="Rabbinowitsch E."/>
            <person name="Steffen D."/>
            <person name="Sanders M."/>
            <person name="Ma J."/>
            <person name="Kohara Y."/>
            <person name="Sharp S."/>
            <person name="Simmonds M.N."/>
            <person name="Spiegler S."/>
            <person name="Tivey A."/>
            <person name="Sugano S."/>
            <person name="White B."/>
            <person name="Walker D."/>
            <person name="Woodward J.R."/>
            <person name="Winckler T."/>
            <person name="Tanaka Y."/>
            <person name="Shaulsky G."/>
            <person name="Schleicher M."/>
            <person name="Weinstock G.M."/>
            <person name="Rosenthal A."/>
            <person name="Cox E.C."/>
            <person name="Chisholm R.L."/>
            <person name="Gibbs R.A."/>
            <person name="Loomis W.F."/>
            <person name="Platzer M."/>
            <person name="Kay R.R."/>
            <person name="Williams J.G."/>
            <person name="Dear P.H."/>
            <person name="Noegel A.A."/>
            <person name="Barrell B.G."/>
            <person name="Kuspa A."/>
        </authorList>
    </citation>
    <scope>NUCLEOTIDE SEQUENCE [LARGE SCALE GENOMIC DNA]</scope>
    <source>
        <strain>AX4</strain>
    </source>
</reference>
<name>LSM3_DICDI</name>
<comment type="function">
    <text evidence="1">Plays a role in pre-mRNA splicing as component of the U4/U6-U5 tri-snRNP complex that is involved in spliceosome assembly, and as component of the precatalytic spliceosome (spliceosome B complex). The heptameric LSM2-8 complex binds specifically to the 3'-terminal U-tract of U6 snRNA.</text>
</comment>
<comment type="subunit">
    <text evidence="1">Component of the precatalytic spliceosome (spliceosome B complex). Component of the U4/U6-U5 tri-snRNP complex, a building block of the precatalytic spliceosome (spliceosome B complex). LSM2, LSM3, LSM4, LSM5, LSM6, LSM7 and LSM8 form a heptameric, ring-shaped subcomplex (the LSM2-8 complex) that is part of the U4/U6-U5 tri-snRNP complex and the precatalytic spliceosome.</text>
</comment>
<comment type="subcellular location">
    <subcellularLocation>
        <location evidence="1">Nucleus</location>
    </subcellularLocation>
</comment>
<comment type="similarity">
    <text evidence="3">Belongs to the snRNP Sm proteins family.</text>
</comment>
<feature type="chain" id="PRO_0000327511" description="Probable U6 snRNA-associated Sm-like protein LSm3">
    <location>
        <begin position="1"/>
        <end position="97"/>
    </location>
</feature>
<feature type="domain" description="Sm" evidence="2">
    <location>
        <begin position="11"/>
        <end position="96"/>
    </location>
</feature>